<comment type="function">
    <text evidence="1">With S4 and S12 plays an important role in translational accuracy.</text>
</comment>
<comment type="function">
    <text evidence="1">Located at the back of the 30S subunit body where it stabilizes the conformation of the head with respect to the body.</text>
</comment>
<comment type="subunit">
    <text evidence="1">Part of the 30S ribosomal subunit. Contacts proteins S4 and S8.</text>
</comment>
<comment type="domain">
    <text>The N-terminal domain interacts with the head of the 30S subunit; the C-terminal domain interacts with the body and contacts protein S4. The interaction surface between S4 and S5 is involved in control of translational fidelity.</text>
</comment>
<comment type="similarity">
    <text evidence="1">Belongs to the universal ribosomal protein uS5 family.</text>
</comment>
<name>RS5_RHOP2</name>
<reference key="1">
    <citation type="submission" date="2006-01" db="EMBL/GenBank/DDBJ databases">
        <title>Complete sequence of Rhodopseudomonas palustris HaA2.</title>
        <authorList>
            <consortium name="US DOE Joint Genome Institute"/>
            <person name="Copeland A."/>
            <person name="Lucas S."/>
            <person name="Lapidus A."/>
            <person name="Barry K."/>
            <person name="Detter J.C."/>
            <person name="Glavina T."/>
            <person name="Hammon N."/>
            <person name="Israni S."/>
            <person name="Pitluck S."/>
            <person name="Chain P."/>
            <person name="Malfatti S."/>
            <person name="Shin M."/>
            <person name="Vergez L."/>
            <person name="Schmutz J."/>
            <person name="Larimer F."/>
            <person name="Land M."/>
            <person name="Hauser L."/>
            <person name="Pelletier D.A."/>
            <person name="Kyrpides N."/>
            <person name="Anderson I."/>
            <person name="Oda Y."/>
            <person name="Harwood C.S."/>
            <person name="Richardson P."/>
        </authorList>
    </citation>
    <scope>NUCLEOTIDE SEQUENCE [LARGE SCALE GENOMIC DNA]</scope>
    <source>
        <strain>HaA2</strain>
    </source>
</reference>
<gene>
    <name evidence="1" type="primary">rpsE</name>
    <name type="ordered locus">RPB_2312</name>
</gene>
<keyword id="KW-1185">Reference proteome</keyword>
<keyword id="KW-0687">Ribonucleoprotein</keyword>
<keyword id="KW-0689">Ribosomal protein</keyword>
<keyword id="KW-0694">RNA-binding</keyword>
<keyword id="KW-0699">rRNA-binding</keyword>
<organism>
    <name type="scientific">Rhodopseudomonas palustris (strain HaA2)</name>
    <dbReference type="NCBI Taxonomy" id="316058"/>
    <lineage>
        <taxon>Bacteria</taxon>
        <taxon>Pseudomonadati</taxon>
        <taxon>Pseudomonadota</taxon>
        <taxon>Alphaproteobacteria</taxon>
        <taxon>Hyphomicrobiales</taxon>
        <taxon>Nitrobacteraceae</taxon>
        <taxon>Rhodopseudomonas</taxon>
    </lineage>
</organism>
<protein>
    <recommendedName>
        <fullName evidence="1">Small ribosomal subunit protein uS5</fullName>
    </recommendedName>
    <alternativeName>
        <fullName evidence="3">30S ribosomal protein S5</fullName>
    </alternativeName>
</protein>
<feature type="chain" id="PRO_1000086045" description="Small ribosomal subunit protein uS5">
    <location>
        <begin position="1"/>
        <end position="191"/>
    </location>
</feature>
<feature type="domain" description="S5 DRBM" evidence="1">
    <location>
        <begin position="23"/>
        <end position="86"/>
    </location>
</feature>
<feature type="region of interest" description="Disordered" evidence="2">
    <location>
        <begin position="1"/>
        <end position="20"/>
    </location>
</feature>
<evidence type="ECO:0000255" key="1">
    <source>
        <dbReference type="HAMAP-Rule" id="MF_01307"/>
    </source>
</evidence>
<evidence type="ECO:0000256" key="2">
    <source>
        <dbReference type="SAM" id="MobiDB-lite"/>
    </source>
</evidence>
<evidence type="ECO:0000305" key="3"/>
<sequence length="191" mass="20696">MAAERERGGRERSRDREERDSEFVDKLVHINRVAKVVKGGKRFGFAALVVIGDQKGRVGFGHGKAREVPEAIRKATEAAKRNLTRVALREGRTLHHDIAGRHGAGRVYLRAAPAGTGIIAGGPMRAVFETLGIQDVVAKSIGSSNPYNMVRATFDALKHVDSPRSVAARRNIKVSTLQARRVGGDAEVVAE</sequence>
<dbReference type="EMBL" id="CP000250">
    <property type="protein sequence ID" value="ABD07017.1"/>
    <property type="molecule type" value="Genomic_DNA"/>
</dbReference>
<dbReference type="RefSeq" id="WP_011441202.1">
    <property type="nucleotide sequence ID" value="NC_007778.1"/>
</dbReference>
<dbReference type="SMR" id="Q2IXP3"/>
<dbReference type="STRING" id="316058.RPB_2312"/>
<dbReference type="KEGG" id="rpb:RPB_2312"/>
<dbReference type="eggNOG" id="COG0098">
    <property type="taxonomic scope" value="Bacteria"/>
</dbReference>
<dbReference type="HOGENOM" id="CLU_065898_2_2_5"/>
<dbReference type="OrthoDB" id="9809045at2"/>
<dbReference type="Proteomes" id="UP000008809">
    <property type="component" value="Chromosome"/>
</dbReference>
<dbReference type="GO" id="GO:0015935">
    <property type="term" value="C:small ribosomal subunit"/>
    <property type="evidence" value="ECO:0007669"/>
    <property type="project" value="InterPro"/>
</dbReference>
<dbReference type="GO" id="GO:0019843">
    <property type="term" value="F:rRNA binding"/>
    <property type="evidence" value="ECO:0007669"/>
    <property type="project" value="UniProtKB-UniRule"/>
</dbReference>
<dbReference type="GO" id="GO:0003735">
    <property type="term" value="F:structural constituent of ribosome"/>
    <property type="evidence" value="ECO:0007669"/>
    <property type="project" value="InterPro"/>
</dbReference>
<dbReference type="GO" id="GO:0006412">
    <property type="term" value="P:translation"/>
    <property type="evidence" value="ECO:0007669"/>
    <property type="project" value="UniProtKB-UniRule"/>
</dbReference>
<dbReference type="FunFam" id="3.30.160.20:FF:000001">
    <property type="entry name" value="30S ribosomal protein S5"/>
    <property type="match status" value="1"/>
</dbReference>
<dbReference type="FunFam" id="3.30.230.10:FF:000002">
    <property type="entry name" value="30S ribosomal protein S5"/>
    <property type="match status" value="1"/>
</dbReference>
<dbReference type="Gene3D" id="3.30.160.20">
    <property type="match status" value="1"/>
</dbReference>
<dbReference type="Gene3D" id="3.30.230.10">
    <property type="match status" value="1"/>
</dbReference>
<dbReference type="HAMAP" id="MF_01307_B">
    <property type="entry name" value="Ribosomal_uS5_B"/>
    <property type="match status" value="1"/>
</dbReference>
<dbReference type="InterPro" id="IPR020568">
    <property type="entry name" value="Ribosomal_Su5_D2-typ_SF"/>
</dbReference>
<dbReference type="InterPro" id="IPR000851">
    <property type="entry name" value="Ribosomal_uS5"/>
</dbReference>
<dbReference type="InterPro" id="IPR005712">
    <property type="entry name" value="Ribosomal_uS5_bac-type"/>
</dbReference>
<dbReference type="InterPro" id="IPR005324">
    <property type="entry name" value="Ribosomal_uS5_C"/>
</dbReference>
<dbReference type="InterPro" id="IPR013810">
    <property type="entry name" value="Ribosomal_uS5_N"/>
</dbReference>
<dbReference type="InterPro" id="IPR018192">
    <property type="entry name" value="Ribosomal_uS5_N_CS"/>
</dbReference>
<dbReference type="InterPro" id="IPR014721">
    <property type="entry name" value="Ribsml_uS5_D2-typ_fold_subgr"/>
</dbReference>
<dbReference type="NCBIfam" id="TIGR01021">
    <property type="entry name" value="rpsE_bact"/>
    <property type="match status" value="1"/>
</dbReference>
<dbReference type="PANTHER" id="PTHR48277">
    <property type="entry name" value="MITOCHONDRIAL RIBOSOMAL PROTEIN S5"/>
    <property type="match status" value="1"/>
</dbReference>
<dbReference type="PANTHER" id="PTHR48277:SF1">
    <property type="entry name" value="MITOCHONDRIAL RIBOSOMAL PROTEIN S5"/>
    <property type="match status" value="1"/>
</dbReference>
<dbReference type="Pfam" id="PF00333">
    <property type="entry name" value="Ribosomal_S5"/>
    <property type="match status" value="1"/>
</dbReference>
<dbReference type="Pfam" id="PF03719">
    <property type="entry name" value="Ribosomal_S5_C"/>
    <property type="match status" value="1"/>
</dbReference>
<dbReference type="SUPFAM" id="SSF54768">
    <property type="entry name" value="dsRNA-binding domain-like"/>
    <property type="match status" value="1"/>
</dbReference>
<dbReference type="SUPFAM" id="SSF54211">
    <property type="entry name" value="Ribosomal protein S5 domain 2-like"/>
    <property type="match status" value="1"/>
</dbReference>
<dbReference type="PROSITE" id="PS00585">
    <property type="entry name" value="RIBOSOMAL_S5"/>
    <property type="match status" value="1"/>
</dbReference>
<dbReference type="PROSITE" id="PS50881">
    <property type="entry name" value="S5_DSRBD"/>
    <property type="match status" value="1"/>
</dbReference>
<accession>Q2IXP3</accession>
<proteinExistence type="inferred from homology"/>